<dbReference type="EMBL" id="CP001048">
    <property type="protein sequence ID" value="ACC87414.1"/>
    <property type="molecule type" value="Genomic_DNA"/>
</dbReference>
<dbReference type="RefSeq" id="WP_002209122.1">
    <property type="nucleotide sequence ID" value="NZ_CP009780.1"/>
</dbReference>
<dbReference type="SMR" id="B2K1X9"/>
<dbReference type="GeneID" id="57974262"/>
<dbReference type="KEGG" id="ypb:YPTS_0426"/>
<dbReference type="GO" id="GO:0005737">
    <property type="term" value="C:cytoplasm"/>
    <property type="evidence" value="ECO:0007669"/>
    <property type="project" value="UniProtKB-SubCell"/>
</dbReference>
<dbReference type="GO" id="GO:0005507">
    <property type="term" value="F:copper ion binding"/>
    <property type="evidence" value="ECO:0007669"/>
    <property type="project" value="UniProtKB-UniRule"/>
</dbReference>
<dbReference type="GO" id="GO:0010038">
    <property type="term" value="P:response to metal ion"/>
    <property type="evidence" value="ECO:0007669"/>
    <property type="project" value="InterPro"/>
</dbReference>
<dbReference type="FunFam" id="3.30.70.120:FF:000004">
    <property type="entry name" value="Divalent-cation tolerance protein CutA"/>
    <property type="match status" value="1"/>
</dbReference>
<dbReference type="Gene3D" id="3.30.70.120">
    <property type="match status" value="1"/>
</dbReference>
<dbReference type="HAMAP" id="MF_01160">
    <property type="entry name" value="CutA"/>
    <property type="match status" value="1"/>
</dbReference>
<dbReference type="InterPro" id="IPR023700">
    <property type="entry name" value="CutA_Enterobact"/>
</dbReference>
<dbReference type="InterPro" id="IPR004323">
    <property type="entry name" value="Ion_tolerance_CutA"/>
</dbReference>
<dbReference type="InterPro" id="IPR011322">
    <property type="entry name" value="N-reg_PII-like_a/b"/>
</dbReference>
<dbReference type="InterPro" id="IPR015867">
    <property type="entry name" value="N-reg_PII/ATP_PRibTrfase_C"/>
</dbReference>
<dbReference type="NCBIfam" id="NF007930">
    <property type="entry name" value="PRK10645.1"/>
    <property type="match status" value="1"/>
</dbReference>
<dbReference type="PANTHER" id="PTHR23419">
    <property type="entry name" value="DIVALENT CATION TOLERANCE CUTA-RELATED"/>
    <property type="match status" value="1"/>
</dbReference>
<dbReference type="PANTHER" id="PTHR23419:SF8">
    <property type="entry name" value="FI09726P"/>
    <property type="match status" value="1"/>
</dbReference>
<dbReference type="Pfam" id="PF03091">
    <property type="entry name" value="CutA1"/>
    <property type="match status" value="1"/>
</dbReference>
<dbReference type="SUPFAM" id="SSF54913">
    <property type="entry name" value="GlnB-like"/>
    <property type="match status" value="1"/>
</dbReference>
<comment type="function">
    <text evidence="1">Involved in resistance toward heavy metals.</text>
</comment>
<comment type="cofactor">
    <cofactor evidence="1">
        <name>Cu cation</name>
        <dbReference type="ChEBI" id="CHEBI:23378"/>
    </cofactor>
    <text evidence="1">Binds 1 copper ion per subunit.</text>
</comment>
<comment type="subunit">
    <text evidence="1">Homotrimer.</text>
</comment>
<comment type="subcellular location">
    <subcellularLocation>
        <location evidence="1">Cytoplasm</location>
    </subcellularLocation>
</comment>
<comment type="similarity">
    <text evidence="1">Belongs to the CutA family.</text>
</comment>
<keyword id="KW-0186">Copper</keyword>
<keyword id="KW-0963">Cytoplasm</keyword>
<keyword id="KW-0479">Metal-binding</keyword>
<name>CUTA_YERPB</name>
<gene>
    <name evidence="1" type="primary">cutA</name>
    <name type="ordered locus">YPTS_0426</name>
</gene>
<feature type="chain" id="PRO_1000137856" description="Divalent-cation tolerance protein CutA">
    <location>
        <begin position="1"/>
        <end position="119"/>
    </location>
</feature>
<feature type="binding site" evidence="1">
    <location>
        <position position="23"/>
    </location>
    <ligand>
        <name>Cu cation</name>
        <dbReference type="ChEBI" id="CHEBI:23378"/>
    </ligand>
</feature>
<feature type="binding site" evidence="1">
    <location>
        <position position="90"/>
    </location>
    <ligand>
        <name>Cu cation</name>
        <dbReference type="ChEBI" id="CHEBI:23378"/>
    </ligand>
</feature>
<feature type="binding site" evidence="1">
    <location>
        <position position="91"/>
    </location>
    <ligand>
        <name>Cu cation</name>
        <dbReference type="ChEBI" id="CHEBI:23378"/>
    </ligand>
</feature>
<accession>B2K1X9</accession>
<evidence type="ECO:0000255" key="1">
    <source>
        <dbReference type="HAMAP-Rule" id="MF_01160"/>
    </source>
</evidence>
<organism>
    <name type="scientific">Yersinia pseudotuberculosis serotype IB (strain PB1/+)</name>
    <dbReference type="NCBI Taxonomy" id="502801"/>
    <lineage>
        <taxon>Bacteria</taxon>
        <taxon>Pseudomonadati</taxon>
        <taxon>Pseudomonadota</taxon>
        <taxon>Gammaproteobacteria</taxon>
        <taxon>Enterobacterales</taxon>
        <taxon>Yersiniaceae</taxon>
        <taxon>Yersinia</taxon>
    </lineage>
</organism>
<protein>
    <recommendedName>
        <fullName evidence="1">Divalent-cation tolerance protein CutA</fullName>
    </recommendedName>
</protein>
<sequence>MSDSDAMTDPNAVSYSNAIVVLCTAPDEASAQNLAAQVLGEKLAACVTLLPGATSLYYWEGKLEQEYEVQLLFKSNTDHQQALLTYIKQHHPYQTPELLVLPVRDGDKDYLSWLNASLL</sequence>
<proteinExistence type="inferred from homology"/>
<reference key="1">
    <citation type="submission" date="2008-04" db="EMBL/GenBank/DDBJ databases">
        <title>Complete sequence of Yersinia pseudotuberculosis PB1/+.</title>
        <authorList>
            <person name="Copeland A."/>
            <person name="Lucas S."/>
            <person name="Lapidus A."/>
            <person name="Glavina del Rio T."/>
            <person name="Dalin E."/>
            <person name="Tice H."/>
            <person name="Bruce D."/>
            <person name="Goodwin L."/>
            <person name="Pitluck S."/>
            <person name="Munk A.C."/>
            <person name="Brettin T."/>
            <person name="Detter J.C."/>
            <person name="Han C."/>
            <person name="Tapia R."/>
            <person name="Schmutz J."/>
            <person name="Larimer F."/>
            <person name="Land M."/>
            <person name="Hauser L."/>
            <person name="Challacombe J.F."/>
            <person name="Green L."/>
            <person name="Lindler L.E."/>
            <person name="Nikolich M.P."/>
            <person name="Richardson P."/>
        </authorList>
    </citation>
    <scope>NUCLEOTIDE SEQUENCE [LARGE SCALE GENOMIC DNA]</scope>
    <source>
        <strain>PB1/+</strain>
    </source>
</reference>